<organismHost>
    <name type="scientific">Homo sapiens</name>
    <name type="common">Human</name>
    <dbReference type="NCBI Taxonomy" id="9606"/>
</organismHost>
<comment type="function">
    <text evidence="3">Calcium-binding protein that interacts with rotavirus cell receptors once the initial attachment by VP4 has been achieved. Rotavirus attachment and entry into the host cell probably involves multiple sequential contacts between the outer capsid proteins VP4 and VP7, and the cell receptors. Following entry into the host cell, low intracellular or intravesicular Ca(2+) concentration probably causes the calcium-stabilized VP7 trimers to dissociate from the virion. This step is probably necessary for the membrane-disrupting entry step and the release of VP4, which is locked onto the virion by VP7.</text>
</comment>
<comment type="subunit">
    <text evidence="3">Homotrimer; disulfide-linked. 2 Ca(2+) ions bound at each subunit interface in the trimer hold the trimer together. Interacts with the intermediate capsid protein VP6. Interacts with the outer capsid protein VP5*.</text>
</comment>
<comment type="subcellular location">
    <subcellularLocation>
        <location evidence="3">Virion</location>
    </subcellularLocation>
    <subcellularLocation>
        <location evidence="3">Host endoplasmic reticulum lumen</location>
    </subcellularLocation>
    <text evidence="3">The outer layer contains 780 copies of VP7, grouped as 260 trimers. Immature double-layered particles assembled in the cytoplasm bud across the membrane of the endoplasmic reticulum, acquiring during this process a transient lipid membrane that is modified with the ER resident viral glycoproteins NSP4 and VP7; these enveloped particles also contain VP4. As the particles move towards the interior of the ER cisternae, the transient lipid membrane and the non-structural protein NSP4 are lost, while the virus surface proteins VP4 and VP7 rearrange to form the outermost virus protein layer, yielding mature infectious triple-layered particles.</text>
</comment>
<comment type="PTM">
    <text evidence="1">N-glycosylated.</text>
</comment>
<comment type="PTM">
    <text evidence="1">Intramolecular disulfide bonds.</text>
</comment>
<comment type="similarity">
    <text evidence="3">Belongs to the rotavirus VP7 family.</text>
</comment>
<keyword id="KW-0106">Calcium</keyword>
<keyword id="KW-0167">Capsid protein</keyword>
<keyword id="KW-1015">Disulfide bond</keyword>
<keyword id="KW-0325">Glycoprotein</keyword>
<keyword id="KW-1038">Host endoplasmic reticulum</keyword>
<keyword id="KW-0945">Host-virus interaction</keyword>
<keyword id="KW-0479">Metal-binding</keyword>
<keyword id="KW-1152">Outer capsid protein</keyword>
<keyword id="KW-1185">Reference proteome</keyword>
<keyword id="KW-0732">Signal</keyword>
<keyword id="KW-1146">T=13 icosahedral capsid protein</keyword>
<keyword id="KW-0946">Virion</keyword>
<sequence>MVCTTLYTVCAILFILFIYILLFRKMFHLITDTLIVILILSNCVEWSQGQMFTDDIYYNGNVETIINSTDPFNVESLCIYFPNAVVGSQGPGKSDGHLNDGNYAQTIATLFETKGFPKGSIILKTYTQTSDFINSVEMTCSYNIVIIPDSPNDSESIEQIAEWILNVWRCDDMNLEIYTYEQIGINNLWAAFGSDCDISVCPLDTTSNGIGCSPASTETYEVVSNDTQLALINVVDNVRHRIQMNTAQCKLKNCIKGEARLNTALIRISTSSSFDNSLSPLNNGQTTRSFKINAKKWWTIFYTIIDYINTIVQAMTPRHRAIYPEGWMLRYA</sequence>
<accession>Q89865</accession>
<reference key="1">
    <citation type="journal article" date="1994" name="J. Med. Virol.">
        <title>Sequence conservation of the major outer capsid glycoprotein of human group C rotaviruses.</title>
        <authorList>
            <person name="Grice A.S."/>
            <person name="Lambden P.R."/>
            <person name="Caul E.O."/>
            <person name="Clarke I.N."/>
        </authorList>
    </citation>
    <scope>NUCLEOTIDE SEQUENCE [GENOMIC RNA]</scope>
</reference>
<reference key="2">
    <citation type="journal article" date="1996" name="Arch. Virol.">
        <title>Sequence conservation and expression of the gene encoding the outer capsid glycoprotein among human group C rotaviruses of global distribution.</title>
        <authorList>
            <person name="Jiang B."/>
            <person name="Tsunemitsu H."/>
            <person name="Dennehy P.H."/>
            <person name="Oishi I."/>
            <person name="Brown D."/>
            <person name="Schnagl R.D."/>
            <person name="Oseto M."/>
            <person name="Fang Z.Y."/>
            <person name="Avendano L.F."/>
            <person name="Saif L.J."/>
            <person name="Glass R.I."/>
        </authorList>
    </citation>
    <scope>NUCLEOTIDE SEQUENCE [GENOMIC RNA]</scope>
    <source>
        <strain>Isolate clinical BF</strain>
    </source>
</reference>
<protein>
    <recommendedName>
        <fullName evidence="3">Outer capsid glycoprotein VP7</fullName>
    </recommendedName>
</protein>
<evidence type="ECO:0000250" key="1"/>
<evidence type="ECO:0000255" key="2"/>
<evidence type="ECO:0000255" key="3">
    <source>
        <dbReference type="HAMAP-Rule" id="MF_04130"/>
    </source>
</evidence>
<organism>
    <name type="scientific">Rotavirus C (isolate RVC/Human/United Kingdom/Bristol/1989)</name>
    <name type="common">RV-C</name>
    <dbReference type="NCBI Taxonomy" id="31567"/>
    <lineage>
        <taxon>Viruses</taxon>
        <taxon>Riboviria</taxon>
        <taxon>Orthornavirae</taxon>
        <taxon>Duplornaviricota</taxon>
        <taxon>Resentoviricetes</taxon>
        <taxon>Reovirales</taxon>
        <taxon>Sedoreoviridae</taxon>
        <taxon>Rotavirus</taxon>
        <taxon>Rotavirus C</taxon>
    </lineage>
</organism>
<name>VP7_ROTHC</name>
<dbReference type="EMBL" id="X77257">
    <property type="protein sequence ID" value="CAA54475.1"/>
    <property type="molecule type" value="Genomic_RNA"/>
</dbReference>
<dbReference type="EMBL" id="X77258">
    <property type="protein sequence ID" value="CAA54476.1"/>
    <property type="molecule type" value="Genomic_RNA"/>
</dbReference>
<dbReference type="EMBL" id="U20989">
    <property type="protein sequence ID" value="AAC54783.1"/>
    <property type="molecule type" value="Genomic_RNA"/>
</dbReference>
<dbReference type="PIR" id="S41417">
    <property type="entry name" value="S41417"/>
</dbReference>
<dbReference type="RefSeq" id="YP_392513.1">
    <property type="nucleotide sequence ID" value="NC_007571.1"/>
</dbReference>
<dbReference type="SMR" id="Q89865"/>
<dbReference type="GeneID" id="3773131"/>
<dbReference type="KEGG" id="vg:3773131"/>
<dbReference type="Proteomes" id="UP000007664">
    <property type="component" value="Genome"/>
</dbReference>
<dbReference type="GO" id="GO:0044166">
    <property type="term" value="C:host cell endoplasmic reticulum lumen"/>
    <property type="evidence" value="ECO:0007669"/>
    <property type="project" value="UniProtKB-SubCell"/>
</dbReference>
<dbReference type="GO" id="GO:0039621">
    <property type="term" value="C:T=13 icosahedral viral capsid"/>
    <property type="evidence" value="ECO:0007669"/>
    <property type="project" value="UniProtKB-UniRule"/>
</dbReference>
<dbReference type="GO" id="GO:0039624">
    <property type="term" value="C:viral outer capsid"/>
    <property type="evidence" value="ECO:0007669"/>
    <property type="project" value="UniProtKB-UniRule"/>
</dbReference>
<dbReference type="GO" id="GO:0046872">
    <property type="term" value="F:metal ion binding"/>
    <property type="evidence" value="ECO:0007669"/>
    <property type="project" value="UniProtKB-KW"/>
</dbReference>
<dbReference type="Gene3D" id="3.40.50.11130">
    <property type="entry name" value="Glycoprotein VP7, domain 1"/>
    <property type="match status" value="1"/>
</dbReference>
<dbReference type="Gene3D" id="2.60.120.800">
    <property type="entry name" value="Rotavirus outer-layer protein VP7, domain 2"/>
    <property type="match status" value="1"/>
</dbReference>
<dbReference type="HAMAP" id="MF_04130">
    <property type="entry name" value="Rota_VP7"/>
    <property type="match status" value="1"/>
</dbReference>
<dbReference type="InterPro" id="IPR001963">
    <property type="entry name" value="VP7"/>
</dbReference>
<dbReference type="InterPro" id="IPR042207">
    <property type="entry name" value="VP7_1"/>
</dbReference>
<dbReference type="InterPro" id="IPR042210">
    <property type="entry name" value="VP7_2"/>
</dbReference>
<dbReference type="Pfam" id="PF00434">
    <property type="entry name" value="VP7"/>
    <property type="match status" value="1"/>
</dbReference>
<proteinExistence type="inferred from homology"/>
<feature type="signal peptide" evidence="2">
    <location>
        <begin position="1"/>
        <end position="49"/>
    </location>
</feature>
<feature type="chain" id="PRO_0000369880" description="Outer capsid glycoprotein VP7">
    <location>
        <begin position="50"/>
        <end position="332"/>
    </location>
</feature>